<evidence type="ECO:0000255" key="1">
    <source>
        <dbReference type="HAMAP-Rule" id="MF_01144"/>
    </source>
</evidence>
<organism>
    <name type="scientific">Escherichia coli O1:K1 / APEC</name>
    <dbReference type="NCBI Taxonomy" id="405955"/>
    <lineage>
        <taxon>Bacteria</taxon>
        <taxon>Pseudomonadati</taxon>
        <taxon>Pseudomonadota</taxon>
        <taxon>Gammaproteobacteria</taxon>
        <taxon>Enterobacterales</taxon>
        <taxon>Enterobacteriaceae</taxon>
        <taxon>Escherichia</taxon>
    </lineage>
</organism>
<keyword id="KW-0997">Cell inner membrane</keyword>
<keyword id="KW-1003">Cell membrane</keyword>
<keyword id="KW-0472">Membrane</keyword>
<keyword id="KW-1185">Reference proteome</keyword>
<keyword id="KW-0812">Transmembrane</keyword>
<keyword id="KW-1133">Transmembrane helix</keyword>
<sequence length="132" mass="14579">MSKTLNIIWQYLRAFVLIYACLYAGIFIASLLPVTIPGSIIGMLILFVLLALQILPAKWVNPGCYVLIRYMALLFVPIGVGVMQYFDLLRAQFGPVVVSCAVSTLVVFLVVSWSSQLVHGERKVVGQKGSEE</sequence>
<name>YOHJ_ECOK1</name>
<protein>
    <recommendedName>
        <fullName evidence="1">UPF0299 membrane protein YohJ</fullName>
    </recommendedName>
</protein>
<comment type="subcellular location">
    <subcellularLocation>
        <location evidence="1">Cell inner membrane</location>
        <topology evidence="1">Multi-pass membrane protein</topology>
    </subcellularLocation>
</comment>
<comment type="similarity">
    <text evidence="1">Belongs to the UPF0299 family.</text>
</comment>
<feature type="chain" id="PRO_1000065455" description="UPF0299 membrane protein YohJ">
    <location>
        <begin position="1"/>
        <end position="132"/>
    </location>
</feature>
<feature type="transmembrane region" description="Helical" evidence="1">
    <location>
        <begin position="7"/>
        <end position="27"/>
    </location>
</feature>
<feature type="transmembrane region" description="Helical" evidence="1">
    <location>
        <begin position="31"/>
        <end position="51"/>
    </location>
</feature>
<feature type="transmembrane region" description="Helical" evidence="1">
    <location>
        <begin position="63"/>
        <end position="83"/>
    </location>
</feature>
<feature type="transmembrane region" description="Helical" evidence="1">
    <location>
        <begin position="93"/>
        <end position="113"/>
    </location>
</feature>
<gene>
    <name evidence="1" type="primary">yohJ</name>
    <name type="ordered locus">Ecok1_20480</name>
    <name type="ORF">APECO1_4409</name>
</gene>
<dbReference type="EMBL" id="CP000468">
    <property type="protein sequence ID" value="ABJ01542.1"/>
    <property type="molecule type" value="Genomic_DNA"/>
</dbReference>
<dbReference type="RefSeq" id="WP_001295452.1">
    <property type="nucleotide sequence ID" value="NZ_CADILS010000004.1"/>
</dbReference>
<dbReference type="SMR" id="A1AD02"/>
<dbReference type="KEGG" id="ecv:APECO1_4409"/>
<dbReference type="HOGENOM" id="CLU_113736_1_1_6"/>
<dbReference type="Proteomes" id="UP000008216">
    <property type="component" value="Chromosome"/>
</dbReference>
<dbReference type="GO" id="GO:0005886">
    <property type="term" value="C:plasma membrane"/>
    <property type="evidence" value="ECO:0007669"/>
    <property type="project" value="UniProtKB-SubCell"/>
</dbReference>
<dbReference type="HAMAP" id="MF_01144">
    <property type="entry name" value="UPF0299"/>
    <property type="match status" value="1"/>
</dbReference>
<dbReference type="InterPro" id="IPR005538">
    <property type="entry name" value="LrgA/CidA"/>
</dbReference>
<dbReference type="InterPro" id="IPR022957">
    <property type="entry name" value="Uncharacterised_UPF0299"/>
</dbReference>
<dbReference type="NCBIfam" id="NF002494">
    <property type="entry name" value="PRK01821.1"/>
    <property type="match status" value="1"/>
</dbReference>
<dbReference type="PANTHER" id="PTHR33931">
    <property type="entry name" value="HOLIN-LIKE PROTEIN CIDA-RELATED"/>
    <property type="match status" value="1"/>
</dbReference>
<dbReference type="PANTHER" id="PTHR33931:SF5">
    <property type="entry name" value="UPF0299 MEMBRANE PROTEIN YOHJ"/>
    <property type="match status" value="1"/>
</dbReference>
<dbReference type="Pfam" id="PF03788">
    <property type="entry name" value="LrgA"/>
    <property type="match status" value="1"/>
</dbReference>
<reference key="1">
    <citation type="journal article" date="2007" name="J. Bacteriol.">
        <title>The genome sequence of avian pathogenic Escherichia coli strain O1:K1:H7 shares strong similarities with human extraintestinal pathogenic E. coli genomes.</title>
        <authorList>
            <person name="Johnson T.J."/>
            <person name="Kariyawasam S."/>
            <person name="Wannemuehler Y."/>
            <person name="Mangiamele P."/>
            <person name="Johnson S.J."/>
            <person name="Doetkott C."/>
            <person name="Skyberg J.A."/>
            <person name="Lynne A.M."/>
            <person name="Johnson J.R."/>
            <person name="Nolan L.K."/>
        </authorList>
    </citation>
    <scope>NUCLEOTIDE SEQUENCE [LARGE SCALE GENOMIC DNA]</scope>
</reference>
<accession>A1AD02</accession>
<proteinExistence type="inferred from homology"/>